<evidence type="ECO:0000255" key="1">
    <source>
        <dbReference type="HAMAP-Rule" id="MF_01306"/>
    </source>
</evidence>
<evidence type="ECO:0000305" key="2"/>
<feature type="chain" id="PRO_0000228939" description="Small ribosomal subunit protein uS4">
    <location>
        <begin position="1"/>
        <end position="208"/>
    </location>
</feature>
<feature type="domain" description="S4 RNA-binding" evidence="1">
    <location>
        <begin position="97"/>
        <end position="160"/>
    </location>
</feature>
<dbReference type="EMBL" id="CP000050">
    <property type="protein sequence ID" value="AAY50361.1"/>
    <property type="molecule type" value="Genomic_DNA"/>
</dbReference>
<dbReference type="RefSeq" id="WP_002811641.1">
    <property type="nucleotide sequence ID" value="NZ_CP155948.1"/>
</dbReference>
<dbReference type="SMR" id="Q4URG2"/>
<dbReference type="GeneID" id="97509359"/>
<dbReference type="KEGG" id="xcb:XC_3317"/>
<dbReference type="HOGENOM" id="CLU_092403_0_2_6"/>
<dbReference type="Proteomes" id="UP000000420">
    <property type="component" value="Chromosome"/>
</dbReference>
<dbReference type="GO" id="GO:0015935">
    <property type="term" value="C:small ribosomal subunit"/>
    <property type="evidence" value="ECO:0007669"/>
    <property type="project" value="InterPro"/>
</dbReference>
<dbReference type="GO" id="GO:0019843">
    <property type="term" value="F:rRNA binding"/>
    <property type="evidence" value="ECO:0007669"/>
    <property type="project" value="UniProtKB-UniRule"/>
</dbReference>
<dbReference type="GO" id="GO:0003735">
    <property type="term" value="F:structural constituent of ribosome"/>
    <property type="evidence" value="ECO:0007669"/>
    <property type="project" value="InterPro"/>
</dbReference>
<dbReference type="GO" id="GO:0042274">
    <property type="term" value="P:ribosomal small subunit biogenesis"/>
    <property type="evidence" value="ECO:0007669"/>
    <property type="project" value="TreeGrafter"/>
</dbReference>
<dbReference type="GO" id="GO:0006412">
    <property type="term" value="P:translation"/>
    <property type="evidence" value="ECO:0007669"/>
    <property type="project" value="UniProtKB-UniRule"/>
</dbReference>
<dbReference type="CDD" id="cd00165">
    <property type="entry name" value="S4"/>
    <property type="match status" value="1"/>
</dbReference>
<dbReference type="FunFam" id="1.10.1050.10:FF:000001">
    <property type="entry name" value="30S ribosomal protein S4"/>
    <property type="match status" value="1"/>
</dbReference>
<dbReference type="FunFam" id="3.10.290.10:FF:000001">
    <property type="entry name" value="30S ribosomal protein S4"/>
    <property type="match status" value="1"/>
</dbReference>
<dbReference type="Gene3D" id="1.10.1050.10">
    <property type="entry name" value="Ribosomal Protein S4 Delta 41, Chain A, domain 1"/>
    <property type="match status" value="1"/>
</dbReference>
<dbReference type="Gene3D" id="3.10.290.10">
    <property type="entry name" value="RNA-binding S4 domain"/>
    <property type="match status" value="1"/>
</dbReference>
<dbReference type="HAMAP" id="MF_01306_B">
    <property type="entry name" value="Ribosomal_uS4_B"/>
    <property type="match status" value="1"/>
</dbReference>
<dbReference type="InterPro" id="IPR022801">
    <property type="entry name" value="Ribosomal_uS4"/>
</dbReference>
<dbReference type="InterPro" id="IPR005709">
    <property type="entry name" value="Ribosomal_uS4_bac-type"/>
</dbReference>
<dbReference type="InterPro" id="IPR018079">
    <property type="entry name" value="Ribosomal_uS4_CS"/>
</dbReference>
<dbReference type="InterPro" id="IPR001912">
    <property type="entry name" value="Ribosomal_uS4_N"/>
</dbReference>
<dbReference type="InterPro" id="IPR002942">
    <property type="entry name" value="S4_RNA-bd"/>
</dbReference>
<dbReference type="InterPro" id="IPR036986">
    <property type="entry name" value="S4_RNA-bd_sf"/>
</dbReference>
<dbReference type="NCBIfam" id="NF003717">
    <property type="entry name" value="PRK05327.1"/>
    <property type="match status" value="1"/>
</dbReference>
<dbReference type="NCBIfam" id="TIGR01017">
    <property type="entry name" value="rpsD_bact"/>
    <property type="match status" value="1"/>
</dbReference>
<dbReference type="PANTHER" id="PTHR11831">
    <property type="entry name" value="30S 40S RIBOSOMAL PROTEIN"/>
    <property type="match status" value="1"/>
</dbReference>
<dbReference type="PANTHER" id="PTHR11831:SF4">
    <property type="entry name" value="SMALL RIBOSOMAL SUBUNIT PROTEIN US4M"/>
    <property type="match status" value="1"/>
</dbReference>
<dbReference type="Pfam" id="PF00163">
    <property type="entry name" value="Ribosomal_S4"/>
    <property type="match status" value="1"/>
</dbReference>
<dbReference type="Pfam" id="PF01479">
    <property type="entry name" value="S4"/>
    <property type="match status" value="1"/>
</dbReference>
<dbReference type="SMART" id="SM01390">
    <property type="entry name" value="Ribosomal_S4"/>
    <property type="match status" value="1"/>
</dbReference>
<dbReference type="SMART" id="SM00363">
    <property type="entry name" value="S4"/>
    <property type="match status" value="1"/>
</dbReference>
<dbReference type="SUPFAM" id="SSF55174">
    <property type="entry name" value="Alpha-L RNA-binding motif"/>
    <property type="match status" value="1"/>
</dbReference>
<dbReference type="PROSITE" id="PS00632">
    <property type="entry name" value="RIBOSOMAL_S4"/>
    <property type="match status" value="1"/>
</dbReference>
<dbReference type="PROSITE" id="PS50889">
    <property type="entry name" value="S4"/>
    <property type="match status" value="1"/>
</dbReference>
<reference key="1">
    <citation type="journal article" date="2005" name="Genome Res.">
        <title>Comparative and functional genomic analyses of the pathogenicity of phytopathogen Xanthomonas campestris pv. campestris.</title>
        <authorList>
            <person name="Qian W."/>
            <person name="Jia Y."/>
            <person name="Ren S.-X."/>
            <person name="He Y.-Q."/>
            <person name="Feng J.-X."/>
            <person name="Lu L.-F."/>
            <person name="Sun Q."/>
            <person name="Ying G."/>
            <person name="Tang D.-J."/>
            <person name="Tang H."/>
            <person name="Wu W."/>
            <person name="Hao P."/>
            <person name="Wang L."/>
            <person name="Jiang B.-L."/>
            <person name="Zeng S."/>
            <person name="Gu W.-Y."/>
            <person name="Lu G."/>
            <person name="Rong L."/>
            <person name="Tian Y."/>
            <person name="Yao Z."/>
            <person name="Fu G."/>
            <person name="Chen B."/>
            <person name="Fang R."/>
            <person name="Qiang B."/>
            <person name="Chen Z."/>
            <person name="Zhao G.-P."/>
            <person name="Tang J.-L."/>
            <person name="He C."/>
        </authorList>
    </citation>
    <scope>NUCLEOTIDE SEQUENCE [LARGE SCALE GENOMIC DNA]</scope>
    <source>
        <strain>8004</strain>
    </source>
</reference>
<keyword id="KW-0687">Ribonucleoprotein</keyword>
<keyword id="KW-0689">Ribosomal protein</keyword>
<keyword id="KW-0694">RNA-binding</keyword>
<keyword id="KW-0699">rRNA-binding</keyword>
<comment type="function">
    <text evidence="1">One of the primary rRNA binding proteins, it binds directly to 16S rRNA where it nucleates assembly of the body of the 30S subunit.</text>
</comment>
<comment type="function">
    <text evidence="1">With S5 and S12 plays an important role in translational accuracy.</text>
</comment>
<comment type="subunit">
    <text evidence="1">Part of the 30S ribosomal subunit. Contacts protein S5. The interaction surface between S4 and S5 is involved in control of translational fidelity.</text>
</comment>
<comment type="similarity">
    <text evidence="1">Belongs to the universal ribosomal protein uS4 family.</text>
</comment>
<sequence length="208" mass="23281">MARYIGPTCKLARREGADLSLKSPARALDSKCKLEQKPGQHGAARKGKLSDYATQLREKQKVKRIYGLLERQFRNYYKKASTKKGNTGENLLQLLETRLDNVCYRMGFAVTRPAARQLVSHRGVLVNGKSVNLASYQIKAGDAITLSEKAQKQLRVQEALTVAEQHDMTPSWVEVDSKKFSGVFKAVPDRADLPSDINEALIVELYSK</sequence>
<name>RS4_XANC8</name>
<gene>
    <name evidence="1" type="primary">rpsD</name>
    <name type="ordered locus">XC_3317</name>
</gene>
<accession>Q4URG2</accession>
<proteinExistence type="inferred from homology"/>
<organism>
    <name type="scientific">Xanthomonas campestris pv. campestris (strain 8004)</name>
    <dbReference type="NCBI Taxonomy" id="314565"/>
    <lineage>
        <taxon>Bacteria</taxon>
        <taxon>Pseudomonadati</taxon>
        <taxon>Pseudomonadota</taxon>
        <taxon>Gammaproteobacteria</taxon>
        <taxon>Lysobacterales</taxon>
        <taxon>Lysobacteraceae</taxon>
        <taxon>Xanthomonas</taxon>
    </lineage>
</organism>
<protein>
    <recommendedName>
        <fullName evidence="1">Small ribosomal subunit protein uS4</fullName>
    </recommendedName>
    <alternativeName>
        <fullName evidence="2">30S ribosomal protein S4</fullName>
    </alternativeName>
</protein>